<evidence type="ECO:0000255" key="1">
    <source>
        <dbReference type="HAMAP-Rule" id="MF_01696"/>
    </source>
</evidence>
<comment type="function">
    <text evidence="1">Catalyzes the deacetylation of 1D-myo-inositol 2-acetamido-2-deoxy-alpha-D-glucopyranoside (GlcNAc-Ins) in the mycothiol biosynthesis pathway.</text>
</comment>
<comment type="catalytic activity">
    <reaction evidence="1">
        <text>1D-myo-inositol 2-acetamido-2-deoxy-alpha-D-glucopyranoside + H2O = 1D-myo-inositol 2-amino-2-deoxy-alpha-D-glucopyranoside + acetate</text>
        <dbReference type="Rhea" id="RHEA:26180"/>
        <dbReference type="ChEBI" id="CHEBI:15377"/>
        <dbReference type="ChEBI" id="CHEBI:30089"/>
        <dbReference type="ChEBI" id="CHEBI:52442"/>
        <dbReference type="ChEBI" id="CHEBI:58886"/>
        <dbReference type="EC" id="3.5.1.103"/>
    </reaction>
</comment>
<comment type="cofactor">
    <cofactor evidence="1">
        <name>Zn(2+)</name>
        <dbReference type="ChEBI" id="CHEBI:29105"/>
    </cofactor>
    <text evidence="1">Binds 1 zinc ion per subunit.</text>
</comment>
<comment type="similarity">
    <text evidence="1">Belongs to the MshB deacetylase family.</text>
</comment>
<feature type="chain" id="PRO_0000400228" description="1D-myo-inositol 2-acetamido-2-deoxy-alpha-D-glucopyranoside deacetylase">
    <location>
        <begin position="1"/>
        <end position="323"/>
    </location>
</feature>
<feature type="binding site" evidence="1">
    <location>
        <position position="28"/>
    </location>
    <ligand>
        <name>Zn(2+)</name>
        <dbReference type="ChEBI" id="CHEBI:29105"/>
    </ligand>
</feature>
<feature type="binding site" evidence="1">
    <location>
        <position position="31"/>
    </location>
    <ligand>
        <name>Zn(2+)</name>
        <dbReference type="ChEBI" id="CHEBI:29105"/>
    </ligand>
</feature>
<feature type="binding site" evidence="1">
    <location>
        <position position="163"/>
    </location>
    <ligand>
        <name>Zn(2+)</name>
        <dbReference type="ChEBI" id="CHEBI:29105"/>
    </ligand>
</feature>
<name>MSHB_STRSW</name>
<accession>C9ZBY0</accession>
<proteinExistence type="inferred from homology"/>
<reference key="1">
    <citation type="journal article" date="2010" name="Mol. Plant Microbe Interact.">
        <title>Streptomyces scabies 87-22 contains a coronafacic acid-like biosynthetic cluster that contributes to plant-microbe interactions.</title>
        <authorList>
            <person name="Bignell D.R."/>
            <person name="Seipke R.F."/>
            <person name="Huguet-Tapia J.C."/>
            <person name="Chambers A.H."/>
            <person name="Parry R.J."/>
            <person name="Loria R."/>
        </authorList>
    </citation>
    <scope>NUCLEOTIDE SEQUENCE [LARGE SCALE GENOMIC DNA]</scope>
    <source>
        <strain>87.22</strain>
    </source>
</reference>
<keyword id="KW-0378">Hydrolase</keyword>
<keyword id="KW-0479">Metal-binding</keyword>
<keyword id="KW-1185">Reference proteome</keyword>
<keyword id="KW-0862">Zinc</keyword>
<organism>
    <name type="scientific">Streptomyces scabiei (strain 87.22)</name>
    <dbReference type="NCBI Taxonomy" id="680198"/>
    <lineage>
        <taxon>Bacteria</taxon>
        <taxon>Bacillati</taxon>
        <taxon>Actinomycetota</taxon>
        <taxon>Actinomycetes</taxon>
        <taxon>Kitasatosporales</taxon>
        <taxon>Streptomycetaceae</taxon>
        <taxon>Streptomyces</taxon>
    </lineage>
</organism>
<sequence length="323" mass="34985">MTDLPSSGPRPGEPLSRVGHRLLLVHAHPDDESINNGATMAKYAAEGARVTLVTCTLGEEGEVIPPSLAHLAPDRDDTLGPYRVDELAGAMKELGVTDHRFLGGAGRYRDSGMMGVEQNERPGAFWSADVDEAAAHLVRVVREVRPQVLVTYDPDGGYGHPDHIQAHRVAMRAAGLAADPAFRPDLGEPWDIAKVYWNRVPRGVVLEGFERLRRDLAEPGRVPFRQAASVTDVPGVVDDHLVTTEIDGTGFAAAKAAAMRAHATQIEVAEPYFALSNALAQPLLSTEYYELVRGRREGGSRESDLFEGIPGISFEERQNGTAL</sequence>
<gene>
    <name evidence="1" type="primary">mshB</name>
    <name type="ordered locus">SCAB_31361</name>
</gene>
<dbReference type="EC" id="3.5.1.103" evidence="1"/>
<dbReference type="EMBL" id="FN554889">
    <property type="protein sequence ID" value="CBG70238.1"/>
    <property type="molecule type" value="Genomic_DNA"/>
</dbReference>
<dbReference type="SMR" id="C9ZBY0"/>
<dbReference type="STRING" id="680198.SCAB_31361"/>
<dbReference type="KEGG" id="scb:SCAB_31361"/>
<dbReference type="eggNOG" id="COG2120">
    <property type="taxonomic scope" value="Bacteria"/>
</dbReference>
<dbReference type="HOGENOM" id="CLU_049311_2_1_11"/>
<dbReference type="Proteomes" id="UP000001444">
    <property type="component" value="Chromosome"/>
</dbReference>
<dbReference type="GO" id="GO:0035595">
    <property type="term" value="F:N-acetylglucosaminylinositol deacetylase activity"/>
    <property type="evidence" value="ECO:0007669"/>
    <property type="project" value="UniProtKB-EC"/>
</dbReference>
<dbReference type="GO" id="GO:0008270">
    <property type="term" value="F:zinc ion binding"/>
    <property type="evidence" value="ECO:0007669"/>
    <property type="project" value="UniProtKB-UniRule"/>
</dbReference>
<dbReference type="GO" id="GO:0010125">
    <property type="term" value="P:mycothiol biosynthetic process"/>
    <property type="evidence" value="ECO:0007669"/>
    <property type="project" value="UniProtKB-UniRule"/>
</dbReference>
<dbReference type="Gene3D" id="3.40.50.10320">
    <property type="entry name" value="LmbE-like"/>
    <property type="match status" value="1"/>
</dbReference>
<dbReference type="HAMAP" id="MF_01696">
    <property type="entry name" value="MshB"/>
    <property type="match status" value="1"/>
</dbReference>
<dbReference type="InterPro" id="IPR003737">
    <property type="entry name" value="GlcNAc_PI_deacetylase-related"/>
</dbReference>
<dbReference type="InterPro" id="IPR024078">
    <property type="entry name" value="LmbE-like_dom_sf"/>
</dbReference>
<dbReference type="InterPro" id="IPR017810">
    <property type="entry name" value="Mycothiol_biosynthesis_MshB"/>
</dbReference>
<dbReference type="NCBIfam" id="TIGR03445">
    <property type="entry name" value="mycothiol_MshB"/>
    <property type="match status" value="1"/>
</dbReference>
<dbReference type="PANTHER" id="PTHR12993:SF26">
    <property type="entry name" value="1D-MYO-INOSITOL 2-ACETAMIDO-2-DEOXY-ALPHA-D-GLUCOPYRANOSIDE DEACETYLASE"/>
    <property type="match status" value="1"/>
</dbReference>
<dbReference type="PANTHER" id="PTHR12993">
    <property type="entry name" value="N-ACETYLGLUCOSAMINYL-PHOSPHATIDYLINOSITOL DE-N-ACETYLASE-RELATED"/>
    <property type="match status" value="1"/>
</dbReference>
<dbReference type="Pfam" id="PF02585">
    <property type="entry name" value="PIG-L"/>
    <property type="match status" value="1"/>
</dbReference>
<dbReference type="SUPFAM" id="SSF102588">
    <property type="entry name" value="LmbE-like"/>
    <property type="match status" value="1"/>
</dbReference>
<protein>
    <recommendedName>
        <fullName evidence="1">1D-myo-inositol 2-acetamido-2-deoxy-alpha-D-glucopyranoside deacetylase</fullName>
        <shortName evidence="1">GlcNAc-Ins deacetylase</shortName>
        <ecNumber evidence="1">3.5.1.103</ecNumber>
    </recommendedName>
    <alternativeName>
        <fullName>N-acetyl-1-D-myo-inositol 2-amino-2-deoxy-alpha-D-glucopyranoside deacetylase</fullName>
    </alternativeName>
</protein>